<dbReference type="GO" id="GO:0005576">
    <property type="term" value="C:extracellular region"/>
    <property type="evidence" value="ECO:0007669"/>
    <property type="project" value="UniProtKB-SubCell"/>
</dbReference>
<dbReference type="GO" id="GO:0030246">
    <property type="term" value="F:carbohydrate binding"/>
    <property type="evidence" value="ECO:0007669"/>
    <property type="project" value="UniProtKB-KW"/>
</dbReference>
<dbReference type="GO" id="GO:0090729">
    <property type="term" value="F:toxin activity"/>
    <property type="evidence" value="ECO:0007669"/>
    <property type="project" value="UniProtKB-KW"/>
</dbReference>
<keyword id="KW-0903">Direct protein sequencing</keyword>
<keyword id="KW-0430">Lectin</keyword>
<keyword id="KW-0959">Myotoxin</keyword>
<keyword id="KW-0964">Secreted</keyword>
<keyword id="KW-0800">Toxin</keyword>
<feature type="chain" id="PRO_0000046723" description="Myotoxin TmC4-47.2">
    <location>
        <begin position="1"/>
        <end position="24" status="greater than"/>
    </location>
</feature>
<feature type="domain" description="C-type lectin" evidence="1">
    <location>
        <begin position="13"/>
        <end position="24" status="greater than"/>
    </location>
</feature>
<feature type="region of interest" description="Disordered" evidence="2">
    <location>
        <begin position="1"/>
        <end position="24"/>
    </location>
</feature>
<feature type="compositionally biased region" description="Basic residues" evidence="2">
    <location>
        <begin position="10"/>
        <end position="24"/>
    </location>
</feature>
<feature type="non-terminal residue">
    <location>
        <position position="24"/>
    </location>
</feature>
<organism>
    <name type="scientific">Thalassophryne maculosa</name>
    <name type="common">Cano toadfish</name>
    <dbReference type="NCBI Taxonomy" id="313355"/>
    <lineage>
        <taxon>Eukaryota</taxon>
        <taxon>Metazoa</taxon>
        <taxon>Chordata</taxon>
        <taxon>Craniata</taxon>
        <taxon>Vertebrata</taxon>
        <taxon>Euteleostomi</taxon>
        <taxon>Actinopterygii</taxon>
        <taxon>Neopterygii</taxon>
        <taxon>Teleostei</taxon>
        <taxon>Neoteleostei</taxon>
        <taxon>Acanthomorphata</taxon>
        <taxon>Batrachoidaria</taxon>
        <taxon>Batrachoididae</taxon>
        <taxon>Thalassophryne</taxon>
    </lineage>
</organism>
<evidence type="ECO:0000255" key="1">
    <source>
        <dbReference type="PROSITE-ProRule" id="PRU00040"/>
    </source>
</evidence>
<evidence type="ECO:0000256" key="2">
    <source>
        <dbReference type="SAM" id="MobiDB-lite"/>
    </source>
</evidence>
<evidence type="ECO:0000269" key="3">
    <source>
    </source>
</evidence>
<evidence type="ECO:0000305" key="4"/>
<reference key="1">
    <citation type="journal article" date="2005" name="Toxicon">
        <title>Purification of a myotoxin from the toadfish Thalassophryne maculosa (Gunter) venom.</title>
        <authorList>
            <person name="Sosa-Rosales J.I."/>
            <person name="D'Suze G."/>
            <person name="Salazar V."/>
            <person name="Fox J."/>
            <person name="Sevcik C."/>
        </authorList>
    </citation>
    <scope>PROTEIN SEQUENCE</scope>
    <scope>FUNCTION</scope>
    <scope>MASS SPECTROMETRY</scope>
    <source>
        <tissue>Venom</tissue>
    </source>
</reference>
<sequence>KASSSAPKGWTHHGSRFTFHRGSM</sequence>
<comment type="function">
    <text evidence="3">Able to depolarize frog skeletal muscle fibers, but has no effects on squid giant axons. Tetrodotoxin is able to partially antagonize the depolarization. Induces myonecrosis.</text>
</comment>
<comment type="subcellular location">
    <subcellularLocation>
        <location>Secreted</location>
    </subcellularLocation>
</comment>
<comment type="tissue specificity">
    <text>Expressed by the venom gland.</text>
</comment>
<comment type="mass spectrometry"/>
<comment type="similarity">
    <text evidence="4">Belongs to the true venom lectin family.</text>
</comment>
<proteinExistence type="evidence at protein level"/>
<name>TMC47_THAMA</name>
<accession>P69438</accession>
<protein>
    <recommendedName>
        <fullName>Myotoxin TmC4-47.2</fullName>
    </recommendedName>
</protein>